<accession>P43547</accession>
<accession>D6VTH4</accession>
<accession>E9P925</accession>
<name>AAD6_YEAST</name>
<protein>
    <recommendedName>
        <fullName evidence="2">Putative aryl-alcohol dehydrogenase AAD6</fullName>
        <ecNumber>1.1.1.-</ecNumber>
    </recommendedName>
</protein>
<comment type="similarity">
    <text evidence="3">Belongs to the aldo/keto reductase family. Aldo/keto reductase 2 subfamily.</text>
</comment>
<comment type="caution">
    <text evidence="4 5">Could be the product of a pseudogene unlikely to encode a functional protein. This is the N-terminal part of an aryl-alcohol dehydrogenase homolog of the AAD family. In strain S288c, a -1 frameshift disrupts the gene coding for this protein and produces two ORFs YFL056C and YFL057C. Because of that it is not part of the S.cerevisiae S288c complete/reference proteome set.</text>
</comment>
<dbReference type="EC" id="1.1.1.-"/>
<dbReference type="EMBL" id="D50617">
    <property type="protein sequence ID" value="BAA09185.1"/>
    <property type="molecule type" value="Genomic_DNA"/>
</dbReference>
<dbReference type="EMBL" id="AY693161">
    <property type="protein sequence ID" value="AAT93180.1"/>
    <property type="molecule type" value="Genomic_DNA"/>
</dbReference>
<dbReference type="PIR" id="S56199">
    <property type="entry name" value="S56199"/>
</dbReference>
<dbReference type="SMR" id="P43547"/>
<dbReference type="BioGRID" id="31091">
    <property type="interactions" value="26"/>
</dbReference>
<dbReference type="DIP" id="DIP-2015N"/>
<dbReference type="IntAct" id="P43547">
    <property type="interactions" value="2"/>
</dbReference>
<dbReference type="MINT" id="P43547"/>
<dbReference type="PaxDb" id="4932-YFL056C"/>
<dbReference type="AGR" id="SGD:S000001838"/>
<dbReference type="SGD" id="S000001838">
    <property type="gene designation" value="AAD6"/>
</dbReference>
<dbReference type="eggNOG" id="KOG1575">
    <property type="taxonomic scope" value="Eukaryota"/>
</dbReference>
<dbReference type="HOGENOM" id="CLU_023205_16_2_1"/>
<dbReference type="GO" id="GO:0016491">
    <property type="term" value="F:oxidoreductase activity"/>
    <property type="evidence" value="ECO:0007669"/>
    <property type="project" value="UniProtKB-KW"/>
</dbReference>
<dbReference type="FunFam" id="3.20.20.100:FF:000083">
    <property type="entry name" value="Aryl-alcohol dehydrogenase"/>
    <property type="match status" value="1"/>
</dbReference>
<dbReference type="Gene3D" id="3.20.20.100">
    <property type="entry name" value="NADP-dependent oxidoreductase domain"/>
    <property type="match status" value="1"/>
</dbReference>
<dbReference type="InterPro" id="IPR050523">
    <property type="entry name" value="AKR_Detox_Biosynth"/>
</dbReference>
<dbReference type="InterPro" id="IPR023210">
    <property type="entry name" value="NADP_OxRdtase_dom"/>
</dbReference>
<dbReference type="InterPro" id="IPR036812">
    <property type="entry name" value="NADP_OxRdtase_dom_sf"/>
</dbReference>
<dbReference type="PANTHER" id="PTHR43364:SF2">
    <property type="entry name" value="ARYL-ALCOHOL DEHYDROGENASE AAD10-RELATED"/>
    <property type="match status" value="1"/>
</dbReference>
<dbReference type="PANTHER" id="PTHR43364">
    <property type="entry name" value="NADH-SPECIFIC METHYLGLYOXAL REDUCTASE-RELATED"/>
    <property type="match status" value="1"/>
</dbReference>
<dbReference type="Pfam" id="PF00248">
    <property type="entry name" value="Aldo_ket_red"/>
    <property type="match status" value="1"/>
</dbReference>
<dbReference type="SUPFAM" id="SSF51430">
    <property type="entry name" value="NAD(P)-linked oxidoreductase"/>
    <property type="match status" value="1"/>
</dbReference>
<keyword id="KW-0560">Oxidoreductase</keyword>
<reference key="1">
    <citation type="journal article" date="1995" name="Nat. Genet.">
        <title>Analysis of the nucleotide sequence of chromosome VI from Saccharomyces cerevisiae.</title>
        <authorList>
            <person name="Murakami Y."/>
            <person name="Naitou M."/>
            <person name="Hagiwara H."/>
            <person name="Shibata T."/>
            <person name="Ozawa M."/>
            <person name="Sasanuma S."/>
            <person name="Sasanuma M."/>
            <person name="Tsuchiya Y."/>
            <person name="Soeda E."/>
            <person name="Yokoyama K."/>
            <person name="Yamazaki M."/>
            <person name="Tashiro H."/>
            <person name="Eki T."/>
        </authorList>
    </citation>
    <scope>NUCLEOTIDE SEQUENCE [LARGE SCALE GENOMIC DNA]</scope>
    <source>
        <strain>ATCC 204508 / S288c</strain>
    </source>
</reference>
<reference key="2">
    <citation type="journal article" date="2014" name="G3 (Bethesda)">
        <title>The reference genome sequence of Saccharomyces cerevisiae: Then and now.</title>
        <authorList>
            <person name="Engel S.R."/>
            <person name="Dietrich F.S."/>
            <person name="Fisk D.G."/>
            <person name="Binkley G."/>
            <person name="Balakrishnan R."/>
            <person name="Costanzo M.C."/>
            <person name="Dwight S.S."/>
            <person name="Hitz B.C."/>
            <person name="Karra K."/>
            <person name="Nash R.S."/>
            <person name="Weng S."/>
            <person name="Wong E.D."/>
            <person name="Lloyd P."/>
            <person name="Skrzypek M.S."/>
            <person name="Miyasato S.R."/>
            <person name="Simison M."/>
            <person name="Cherry J.M."/>
        </authorList>
    </citation>
    <scope>GENOME REANNOTATION</scope>
    <source>
        <strain>ATCC 204508 / S288c</strain>
    </source>
</reference>
<reference key="3">
    <citation type="journal article" date="2007" name="Genome Res.">
        <title>Approaching a complete repository of sequence-verified protein-encoding clones for Saccharomyces cerevisiae.</title>
        <authorList>
            <person name="Hu Y."/>
            <person name="Rolfs A."/>
            <person name="Bhullar B."/>
            <person name="Murthy T.V.S."/>
            <person name="Zhu C."/>
            <person name="Berger M.F."/>
            <person name="Camargo A.A."/>
            <person name="Kelley F."/>
            <person name="McCarron S."/>
            <person name="Jepson D."/>
            <person name="Richardson A."/>
            <person name="Raphael J."/>
            <person name="Moreira D."/>
            <person name="Taycher E."/>
            <person name="Zuo D."/>
            <person name="Mohr S."/>
            <person name="Kane M.F."/>
            <person name="Williamson J."/>
            <person name="Simpson A.J.G."/>
            <person name="Bulyk M.L."/>
            <person name="Harlow E."/>
            <person name="Marsischky G."/>
            <person name="Kolodner R.D."/>
            <person name="LaBaer J."/>
        </authorList>
    </citation>
    <scope>NUCLEOTIDE SEQUENCE [GENOMIC DNA]</scope>
    <source>
        <strain>ATCC 204508 / S288c</strain>
    </source>
</reference>
<reference key="4">
    <citation type="journal article" date="1999" name="Genetics">
        <title>Analysis of the seven-member AAD gene set demonstrates that genetic redundancy in yeast may be more apparent than real.</title>
        <authorList>
            <person name="Delneri D."/>
            <person name="Gardner D.C.J."/>
            <person name="Oliver S.G."/>
        </authorList>
    </citation>
    <scope>IDENTIFICATION OF FRAMESHIFT</scope>
</reference>
<organism>
    <name type="scientific">Saccharomyces cerevisiae (strain ATCC 204508 / S288c)</name>
    <name type="common">Baker's yeast</name>
    <dbReference type="NCBI Taxonomy" id="559292"/>
    <lineage>
        <taxon>Eukaryota</taxon>
        <taxon>Fungi</taxon>
        <taxon>Dikarya</taxon>
        <taxon>Ascomycota</taxon>
        <taxon>Saccharomycotina</taxon>
        <taxon>Saccharomycetes</taxon>
        <taxon>Saccharomycetales</taxon>
        <taxon>Saccharomycetaceae</taxon>
        <taxon>Saccharomyces</taxon>
    </lineage>
</organism>
<feature type="chain" id="PRO_0000070367" description="Putative aryl-alcohol dehydrogenase AAD6">
    <location>
        <begin position="1"/>
        <end position="212"/>
    </location>
</feature>
<feature type="active site" description="Proton donor" evidence="1">
    <location>
        <position position="76"/>
    </location>
</feature>
<feature type="sequence conflict" description="In Ref. 3; AAT93180." evidence="3" ref="3">
    <original>V</original>
    <variation>K</variation>
    <location>
        <position position="208"/>
    </location>
</feature>
<proteinExistence type="uncertain"/>
<sequence>MADLFAPAPEPSTELGRLRVLSKSAGIRVSPLILGGMSIGDAWSEILGSMSKERAFELLDAFYEAGGNFIDTANNYQNEQSEAWIGEWMVSRKLRDQIVIATKFTTDYKKYDVGGGKSANYCGNHKRSLHVSVRDSLRKLQTDWIDILYVHWWDYMSSIEEVMDSLHILVQQARSSIWVCLIRLPGLFLRQITTLNLMVKPLLASIKVNGTC</sequence>
<gene>
    <name evidence="2" type="primary">AAD6</name>
    <name evidence="6" type="ordered locus">YFL056C</name>
</gene>
<evidence type="ECO:0000250" key="1"/>
<evidence type="ECO:0000303" key="2">
    <source>
    </source>
</evidence>
<evidence type="ECO:0000305" key="3"/>
<evidence type="ECO:0000305" key="4">
    <source>
    </source>
</evidence>
<evidence type="ECO:0000305" key="5">
    <source>
    </source>
</evidence>
<evidence type="ECO:0000312" key="6">
    <source>
        <dbReference type="SGD" id="S000001838"/>
    </source>
</evidence>